<feature type="peptide" id="PRO_0000043734" description="Aurein-5.2">
    <location>
        <begin position="1"/>
        <end position="25"/>
    </location>
</feature>
<reference key="1">
    <citation type="journal article" date="2000" name="Eur. J. Biochem.">
        <title>The antibiotic and anticancer active aurein peptides from the australian bell frogs Litoria aurea and Litoria raniformis the solution structure of aurein 1.2.</title>
        <authorList>
            <person name="Rozek T."/>
            <person name="Wegener K.L."/>
            <person name="Bowie J.H."/>
            <person name="Olver I.N."/>
            <person name="Carver J.A."/>
            <person name="Wallace J.C."/>
            <person name="Tyler M.J."/>
        </authorList>
    </citation>
    <scope>PROTEIN SEQUENCE</scope>
    <scope>FUNCTION</scope>
    <source>
        <tissue>Skin secretion</tissue>
    </source>
</reference>
<comment type="function">
    <text evidence="1">Has antimicrobial activity against L.lactis and S.uberis.</text>
</comment>
<comment type="subcellular location">
    <subcellularLocation>
        <location>Secreted</location>
    </subcellularLocation>
</comment>
<comment type="tissue specificity">
    <text>Expressed by the skin dorsal glands.</text>
</comment>
<organism>
    <name type="scientific">Ranoidea raniformis</name>
    <name type="common">Southern bell frog</name>
    <name type="synonym">Litoria raniformis</name>
    <dbReference type="NCBI Taxonomy" id="116057"/>
    <lineage>
        <taxon>Eukaryota</taxon>
        <taxon>Metazoa</taxon>
        <taxon>Chordata</taxon>
        <taxon>Craniata</taxon>
        <taxon>Vertebrata</taxon>
        <taxon>Euteleostomi</taxon>
        <taxon>Amphibia</taxon>
        <taxon>Batrachia</taxon>
        <taxon>Anura</taxon>
        <taxon>Neobatrachia</taxon>
        <taxon>Hyloidea</taxon>
        <taxon>Hylidae</taxon>
        <taxon>Pelodryadinae</taxon>
        <taxon>Ranoidea</taxon>
    </lineage>
</organism>
<evidence type="ECO:0000269" key="1">
    <source>
    </source>
</evidence>
<dbReference type="GO" id="GO:0005576">
    <property type="term" value="C:extracellular region"/>
    <property type="evidence" value="ECO:0007669"/>
    <property type="project" value="UniProtKB-SubCell"/>
</dbReference>
<dbReference type="GO" id="GO:0042742">
    <property type="term" value="P:defense response to bacterium"/>
    <property type="evidence" value="ECO:0007669"/>
    <property type="project" value="UniProtKB-KW"/>
</dbReference>
<dbReference type="InterPro" id="IPR032021">
    <property type="entry name" value="Frog_Litoria"/>
</dbReference>
<dbReference type="Pfam" id="PF16049">
    <property type="entry name" value="Antimicrobial24"/>
    <property type="match status" value="1"/>
</dbReference>
<keyword id="KW-0878">Amphibian defense peptide</keyword>
<keyword id="KW-0044">Antibiotic</keyword>
<keyword id="KW-0929">Antimicrobial</keyword>
<keyword id="KW-0903">Direct protein sequencing</keyword>
<keyword id="KW-0964">Secreted</keyword>
<protein>
    <recommendedName>
        <fullName>Aurein-5.2</fullName>
    </recommendedName>
</protein>
<sequence>GLMSSIGKALGGLIVDVLKPKTPAS</sequence>
<proteinExistence type="evidence at protein level"/>
<accession>P69030</accession>
<accession>P82402</accession>
<name>AUR52_RANRN</name>